<name>YYDD_BACSU</name>
<reference key="1">
    <citation type="journal article" date="1997" name="DNA Res.">
        <title>Sequence analysis of the 36-kb region between gntZ and trnY genes of Bacillus subtilis genome.</title>
        <authorList>
            <person name="Kasahara Y."/>
            <person name="Nakai S."/>
            <person name="Ogasawara N."/>
        </authorList>
    </citation>
    <scope>NUCLEOTIDE SEQUENCE [GENOMIC DNA]</scope>
    <source>
        <strain>168</strain>
    </source>
</reference>
<reference key="2">
    <citation type="journal article" date="1997" name="Nature">
        <title>The complete genome sequence of the Gram-positive bacterium Bacillus subtilis.</title>
        <authorList>
            <person name="Kunst F."/>
            <person name="Ogasawara N."/>
            <person name="Moszer I."/>
            <person name="Albertini A.M."/>
            <person name="Alloni G."/>
            <person name="Azevedo V."/>
            <person name="Bertero M.G."/>
            <person name="Bessieres P."/>
            <person name="Bolotin A."/>
            <person name="Borchert S."/>
            <person name="Borriss R."/>
            <person name="Boursier L."/>
            <person name="Brans A."/>
            <person name="Braun M."/>
            <person name="Brignell S.C."/>
            <person name="Bron S."/>
            <person name="Brouillet S."/>
            <person name="Bruschi C.V."/>
            <person name="Caldwell B."/>
            <person name="Capuano V."/>
            <person name="Carter N.M."/>
            <person name="Choi S.-K."/>
            <person name="Codani J.-J."/>
            <person name="Connerton I.F."/>
            <person name="Cummings N.J."/>
            <person name="Daniel R.A."/>
            <person name="Denizot F."/>
            <person name="Devine K.M."/>
            <person name="Duesterhoeft A."/>
            <person name="Ehrlich S.D."/>
            <person name="Emmerson P.T."/>
            <person name="Entian K.-D."/>
            <person name="Errington J."/>
            <person name="Fabret C."/>
            <person name="Ferrari E."/>
            <person name="Foulger D."/>
            <person name="Fritz C."/>
            <person name="Fujita M."/>
            <person name="Fujita Y."/>
            <person name="Fuma S."/>
            <person name="Galizzi A."/>
            <person name="Galleron N."/>
            <person name="Ghim S.-Y."/>
            <person name="Glaser P."/>
            <person name="Goffeau A."/>
            <person name="Golightly E.J."/>
            <person name="Grandi G."/>
            <person name="Guiseppi G."/>
            <person name="Guy B.J."/>
            <person name="Haga K."/>
            <person name="Haiech J."/>
            <person name="Harwood C.R."/>
            <person name="Henaut A."/>
            <person name="Hilbert H."/>
            <person name="Holsappel S."/>
            <person name="Hosono S."/>
            <person name="Hullo M.-F."/>
            <person name="Itaya M."/>
            <person name="Jones L.-M."/>
            <person name="Joris B."/>
            <person name="Karamata D."/>
            <person name="Kasahara Y."/>
            <person name="Klaerr-Blanchard M."/>
            <person name="Klein C."/>
            <person name="Kobayashi Y."/>
            <person name="Koetter P."/>
            <person name="Koningstein G."/>
            <person name="Krogh S."/>
            <person name="Kumano M."/>
            <person name="Kurita K."/>
            <person name="Lapidus A."/>
            <person name="Lardinois S."/>
            <person name="Lauber J."/>
            <person name="Lazarevic V."/>
            <person name="Lee S.-M."/>
            <person name="Levine A."/>
            <person name="Liu H."/>
            <person name="Masuda S."/>
            <person name="Mauel C."/>
            <person name="Medigue C."/>
            <person name="Medina N."/>
            <person name="Mellado R.P."/>
            <person name="Mizuno M."/>
            <person name="Moestl D."/>
            <person name="Nakai S."/>
            <person name="Noback M."/>
            <person name="Noone D."/>
            <person name="O'Reilly M."/>
            <person name="Ogawa K."/>
            <person name="Ogiwara A."/>
            <person name="Oudega B."/>
            <person name="Park S.-H."/>
            <person name="Parro V."/>
            <person name="Pohl T.M."/>
            <person name="Portetelle D."/>
            <person name="Porwollik S."/>
            <person name="Prescott A.M."/>
            <person name="Presecan E."/>
            <person name="Pujic P."/>
            <person name="Purnelle B."/>
            <person name="Rapoport G."/>
            <person name="Rey M."/>
            <person name="Reynolds S."/>
            <person name="Rieger M."/>
            <person name="Rivolta C."/>
            <person name="Rocha E."/>
            <person name="Roche B."/>
            <person name="Rose M."/>
            <person name="Sadaie Y."/>
            <person name="Sato T."/>
            <person name="Scanlan E."/>
            <person name="Schleich S."/>
            <person name="Schroeter R."/>
            <person name="Scoffone F."/>
            <person name="Sekiguchi J."/>
            <person name="Sekowska A."/>
            <person name="Seror S.J."/>
            <person name="Serror P."/>
            <person name="Shin B.-S."/>
            <person name="Soldo B."/>
            <person name="Sorokin A."/>
            <person name="Tacconi E."/>
            <person name="Takagi T."/>
            <person name="Takahashi H."/>
            <person name="Takemaru K."/>
            <person name="Takeuchi M."/>
            <person name="Tamakoshi A."/>
            <person name="Tanaka T."/>
            <person name="Terpstra P."/>
            <person name="Tognoni A."/>
            <person name="Tosato V."/>
            <person name="Uchiyama S."/>
            <person name="Vandenbol M."/>
            <person name="Vannier F."/>
            <person name="Vassarotti A."/>
            <person name="Viari A."/>
            <person name="Wambutt R."/>
            <person name="Wedler E."/>
            <person name="Wedler H."/>
            <person name="Weitzenegger T."/>
            <person name="Winters P."/>
            <person name="Wipat A."/>
            <person name="Yamamoto H."/>
            <person name="Yamane K."/>
            <person name="Yasumoto K."/>
            <person name="Yata K."/>
            <person name="Yoshida K."/>
            <person name="Yoshikawa H.-F."/>
            <person name="Zumstein E."/>
            <person name="Yoshikawa H."/>
            <person name="Danchin A."/>
        </authorList>
    </citation>
    <scope>NUCLEOTIDE SEQUENCE [LARGE SCALE GENOMIC DNA]</scope>
    <source>
        <strain>168</strain>
    </source>
</reference>
<dbReference type="EMBL" id="D78193">
    <property type="protein sequence ID" value="BAA11278.1"/>
    <property type="molecule type" value="Genomic_DNA"/>
</dbReference>
<dbReference type="EMBL" id="AL009126">
    <property type="protein sequence ID" value="CAB16057.1"/>
    <property type="molecule type" value="Genomic_DNA"/>
</dbReference>
<dbReference type="PIR" id="C70091">
    <property type="entry name" value="C70091"/>
</dbReference>
<dbReference type="RefSeq" id="NP_391900.1">
    <property type="nucleotide sequence ID" value="NC_000964.3"/>
</dbReference>
<dbReference type="RefSeq" id="WP_009969953.1">
    <property type="nucleotide sequence ID" value="NZ_OZ025638.1"/>
</dbReference>
<dbReference type="SMR" id="Q45598"/>
<dbReference type="FunCoup" id="Q45598">
    <property type="interactions" value="19"/>
</dbReference>
<dbReference type="STRING" id="224308.BSU40200"/>
<dbReference type="jPOST" id="Q45598"/>
<dbReference type="PaxDb" id="224308-BSU40200"/>
<dbReference type="EnsemblBacteria" id="CAB16057">
    <property type="protein sequence ID" value="CAB16057"/>
    <property type="gene ID" value="BSU_40200"/>
</dbReference>
<dbReference type="GeneID" id="937732"/>
<dbReference type="KEGG" id="bsu:BSU40200"/>
<dbReference type="PATRIC" id="fig|224308.43.peg.4217"/>
<dbReference type="eggNOG" id="COG5293">
    <property type="taxonomic scope" value="Bacteria"/>
</dbReference>
<dbReference type="InParanoid" id="Q45598"/>
<dbReference type="OrthoDB" id="2904091at2"/>
<dbReference type="BioCyc" id="BSUB:BSU40200-MONOMER"/>
<dbReference type="Proteomes" id="UP000001570">
    <property type="component" value="Chromosome"/>
</dbReference>
<dbReference type="Gene3D" id="3.40.50.300">
    <property type="entry name" value="P-loop containing nucleotide triphosphate hydrolases"/>
    <property type="match status" value="1"/>
</dbReference>
<dbReference type="InterPro" id="IPR018760">
    <property type="entry name" value="DUF2326"/>
</dbReference>
<dbReference type="InterPro" id="IPR027417">
    <property type="entry name" value="P-loop_NTPase"/>
</dbReference>
<dbReference type="Pfam" id="PF10088">
    <property type="entry name" value="DUF2326"/>
    <property type="match status" value="1"/>
</dbReference>
<dbReference type="SUPFAM" id="SSF52540">
    <property type="entry name" value="P-loop containing nucleoside triphosphate hydrolases"/>
    <property type="match status" value="1"/>
</dbReference>
<keyword id="KW-0175">Coiled coil</keyword>
<keyword id="KW-1185">Reference proteome</keyword>
<organism>
    <name type="scientific">Bacillus subtilis (strain 168)</name>
    <dbReference type="NCBI Taxonomy" id="224308"/>
    <lineage>
        <taxon>Bacteria</taxon>
        <taxon>Bacillati</taxon>
        <taxon>Bacillota</taxon>
        <taxon>Bacilli</taxon>
        <taxon>Bacillales</taxon>
        <taxon>Bacillaceae</taxon>
        <taxon>Bacillus</taxon>
    </lineage>
</organism>
<gene>
    <name type="primary">yydD</name>
    <name type="ordered locus">BSU40200</name>
</gene>
<protein>
    <recommendedName>
        <fullName>Uncharacterized protein YydD</fullName>
    </recommendedName>
</protein>
<sequence>MIVMIIKNLFVCNSQEILKEYKFNAVGVNIILGEKREDHEETNGVGKSTMIECISFLLGKTISNFYTTNEILLNKNVFIVLNVEIDGNQVFLARSFNSPKHGYTLHDTSLTFNLEEWKKVSISVYKKFIEKEILKGEKEDITFAALREYIIRDEKTGFNDIVLPNRGGLKQYKLLNYLFTLPTHTEKNIKVFRDKIEKLNSEIKLIESMNINIGDLKVKEDELINEIEDYNRVIYQTKTANKYNNDTNRYSEIKSELNKIQNEIFENEHICKQYQRNIDDLNKKVTKIKELENIEKFYEDIVGFFPEEVKQNYNKVQEFYNFMVESRGSYFKDKIVKIQADLKKLNIKKQGLTEQLESSARILKSNNFIEDISIVMEEQRRKEIELAEVRLRISDYDKKNHIFDKINELQHEILRVNSMYYDEFQSYSAIVSELKKLFNNLMDVTYNQHGFLDFEYDNRISNAKQSTTGRIKISCSIPDERSHGRLHMKINIFDLTWFLYRCINKCSLNILIHDGSYSNPDPHVKGTLLKHINSSLLENRIGQYFVTINKNELLLDDLQELESKGMIVAKLDRNNEDKNRFFGFRF</sequence>
<accession>Q45598</accession>
<accession>Q794W7</accession>
<proteinExistence type="predicted"/>
<evidence type="ECO:0000255" key="1"/>
<feature type="chain" id="PRO_0000360571" description="Uncharacterized protein YydD">
    <location>
        <begin position="1"/>
        <end position="586"/>
    </location>
</feature>
<feature type="coiled-coil region" evidence="1">
    <location>
        <begin position="183"/>
        <end position="293"/>
    </location>
</feature>
<feature type="coiled-coil region" evidence="1">
    <location>
        <begin position="331"/>
        <end position="400"/>
    </location>
</feature>